<sequence length="301" mass="34770">MFGWHWLLEWQTPYEFHGHLIEKVFAEEKTPYQHVTLVEFTRFGKGLIIDGKVQSTLYDEHIYHELLVHPLLLSLPKPPKNVLILGGGEGATLREVLKYKSVEKAVMVDIDEKVIEFAKKYLYEWHQGAFEDKRTSLVITDGLKFINETKDKYDAIILDLTDPIKDSTSYMLYTKEFYEKLRGILNQGGGIVTQATSPSFSLEVYVTIYNTIKEVFKEASASYTYMASFDGLWGFVYGGVRPDLLSEDEVNSRIRERISGQLRFYDDYSHKISFSLPKNIKSEFKKITKVSTEKDPIYVPA</sequence>
<protein>
    <recommendedName>
        <fullName evidence="1">Polyamine aminopropyltransferase</fullName>
    </recommendedName>
    <alternativeName>
        <fullName evidence="1">Putrescine aminopropyltransferase</fullName>
        <shortName evidence="1">PAPT</shortName>
    </alternativeName>
    <alternativeName>
        <fullName evidence="1">Spermidine synthase</fullName>
        <shortName evidence="1">SPDS</shortName>
        <shortName evidence="1">SPDSY</shortName>
        <ecNumber evidence="1">2.5.1.16</ecNumber>
    </alternativeName>
</protein>
<keyword id="KW-0963">Cytoplasm</keyword>
<keyword id="KW-0620">Polyamine biosynthesis</keyword>
<keyword id="KW-0745">Spermidine biosynthesis</keyword>
<keyword id="KW-0808">Transferase</keyword>
<dbReference type="EC" id="2.5.1.16" evidence="1"/>
<dbReference type="EMBL" id="CP001399">
    <property type="protein sequence ID" value="ACP35489.1"/>
    <property type="molecule type" value="Genomic_DNA"/>
</dbReference>
<dbReference type="RefSeq" id="WP_012711385.1">
    <property type="nucleotide sequence ID" value="NC_012589.1"/>
</dbReference>
<dbReference type="SMR" id="C3MQ26"/>
<dbReference type="KEGG" id="sis:LS215_1482"/>
<dbReference type="HOGENOM" id="CLU_048199_0_1_2"/>
<dbReference type="OrthoDB" id="10538at2157"/>
<dbReference type="UniPathway" id="UPA00248">
    <property type="reaction ID" value="UER00314"/>
</dbReference>
<dbReference type="Proteomes" id="UP000001747">
    <property type="component" value="Chromosome"/>
</dbReference>
<dbReference type="GO" id="GO:0005737">
    <property type="term" value="C:cytoplasm"/>
    <property type="evidence" value="ECO:0007669"/>
    <property type="project" value="UniProtKB-SubCell"/>
</dbReference>
<dbReference type="GO" id="GO:0004766">
    <property type="term" value="F:spermidine synthase activity"/>
    <property type="evidence" value="ECO:0007669"/>
    <property type="project" value="UniProtKB-UniRule"/>
</dbReference>
<dbReference type="GO" id="GO:0010487">
    <property type="term" value="F:thermospermine synthase activity"/>
    <property type="evidence" value="ECO:0007669"/>
    <property type="project" value="TreeGrafter"/>
</dbReference>
<dbReference type="GO" id="GO:0008295">
    <property type="term" value="P:spermidine biosynthetic process"/>
    <property type="evidence" value="ECO:0007669"/>
    <property type="project" value="UniProtKB-UniRule"/>
</dbReference>
<dbReference type="CDD" id="cd02440">
    <property type="entry name" value="AdoMet_MTases"/>
    <property type="match status" value="1"/>
</dbReference>
<dbReference type="FunFam" id="2.30.140.10:FF:000017">
    <property type="entry name" value="Polyamine aminopropyltransferase"/>
    <property type="match status" value="1"/>
</dbReference>
<dbReference type="FunFam" id="3.40.50.150:FF:000088">
    <property type="entry name" value="Polyamine aminopropyltransferase"/>
    <property type="match status" value="1"/>
</dbReference>
<dbReference type="Gene3D" id="2.30.140.10">
    <property type="entry name" value="Spermidine synthase, tetramerisation domain"/>
    <property type="match status" value="1"/>
</dbReference>
<dbReference type="Gene3D" id="3.40.50.150">
    <property type="entry name" value="Vaccinia Virus protein VP39"/>
    <property type="match status" value="1"/>
</dbReference>
<dbReference type="HAMAP" id="MF_00198">
    <property type="entry name" value="Spermidine_synth"/>
    <property type="match status" value="1"/>
</dbReference>
<dbReference type="InterPro" id="IPR030374">
    <property type="entry name" value="PABS"/>
</dbReference>
<dbReference type="InterPro" id="IPR030373">
    <property type="entry name" value="PABS_CS"/>
</dbReference>
<dbReference type="InterPro" id="IPR029063">
    <property type="entry name" value="SAM-dependent_MTases_sf"/>
</dbReference>
<dbReference type="InterPro" id="IPR001045">
    <property type="entry name" value="Spermi_synthase"/>
</dbReference>
<dbReference type="InterPro" id="IPR035246">
    <property type="entry name" value="Spermidine_synt_N"/>
</dbReference>
<dbReference type="InterPro" id="IPR037163">
    <property type="entry name" value="Spermidine_synt_N_sf"/>
</dbReference>
<dbReference type="PANTHER" id="PTHR43317">
    <property type="entry name" value="THERMOSPERMINE SYNTHASE ACAULIS5"/>
    <property type="match status" value="1"/>
</dbReference>
<dbReference type="PANTHER" id="PTHR43317:SF1">
    <property type="entry name" value="THERMOSPERMINE SYNTHASE ACAULIS5"/>
    <property type="match status" value="1"/>
</dbReference>
<dbReference type="Pfam" id="PF17284">
    <property type="entry name" value="Spermine_synt_N"/>
    <property type="match status" value="1"/>
</dbReference>
<dbReference type="Pfam" id="PF01564">
    <property type="entry name" value="Spermine_synth"/>
    <property type="match status" value="1"/>
</dbReference>
<dbReference type="SUPFAM" id="SSF53335">
    <property type="entry name" value="S-adenosyl-L-methionine-dependent methyltransferases"/>
    <property type="match status" value="1"/>
</dbReference>
<dbReference type="PROSITE" id="PS01330">
    <property type="entry name" value="PABS_1"/>
    <property type="match status" value="1"/>
</dbReference>
<dbReference type="PROSITE" id="PS51006">
    <property type="entry name" value="PABS_2"/>
    <property type="match status" value="1"/>
</dbReference>
<comment type="function">
    <text evidence="1">Catalyzes the irreversible transfer of a propylamine group from the amino donor S-adenosylmethioninamine (decarboxy-AdoMet) to putrescine (1,4-diaminobutane) to yield spermidine.</text>
</comment>
<comment type="catalytic activity">
    <reaction evidence="1">
        <text>S-adenosyl 3-(methylsulfanyl)propylamine + putrescine = S-methyl-5'-thioadenosine + spermidine + H(+)</text>
        <dbReference type="Rhea" id="RHEA:12721"/>
        <dbReference type="ChEBI" id="CHEBI:15378"/>
        <dbReference type="ChEBI" id="CHEBI:17509"/>
        <dbReference type="ChEBI" id="CHEBI:57443"/>
        <dbReference type="ChEBI" id="CHEBI:57834"/>
        <dbReference type="ChEBI" id="CHEBI:326268"/>
        <dbReference type="EC" id="2.5.1.16"/>
    </reaction>
</comment>
<comment type="pathway">
    <text evidence="1">Amine and polyamine biosynthesis; spermidine biosynthesis; spermidine from putrescine: step 1/1.</text>
</comment>
<comment type="subunit">
    <text evidence="1">Homodimer or homotetramer.</text>
</comment>
<comment type="subcellular location">
    <subcellularLocation>
        <location evidence="1">Cytoplasm</location>
    </subcellularLocation>
</comment>
<comment type="similarity">
    <text evidence="1">Belongs to the spermidine/spermine synthase family.</text>
</comment>
<name>SPEE_SACI2</name>
<accession>C3MQ26</accession>
<reference key="1">
    <citation type="journal article" date="2009" name="Proc. Natl. Acad. Sci. U.S.A.">
        <title>Biogeography of the Sulfolobus islandicus pan-genome.</title>
        <authorList>
            <person name="Reno M.L."/>
            <person name="Held N.L."/>
            <person name="Fields C.J."/>
            <person name="Burke P.V."/>
            <person name="Whitaker R.J."/>
        </authorList>
    </citation>
    <scope>NUCLEOTIDE SEQUENCE [LARGE SCALE GENOMIC DNA]</scope>
    <source>
        <strain>L.S.2.15 / Lassen #1</strain>
    </source>
</reference>
<organism>
    <name type="scientific">Saccharolobus islandicus (strain L.S.2.15 / Lassen #1)</name>
    <name type="common">Sulfolobus islandicus</name>
    <dbReference type="NCBI Taxonomy" id="429572"/>
    <lineage>
        <taxon>Archaea</taxon>
        <taxon>Thermoproteota</taxon>
        <taxon>Thermoprotei</taxon>
        <taxon>Sulfolobales</taxon>
        <taxon>Sulfolobaceae</taxon>
        <taxon>Saccharolobus</taxon>
    </lineage>
</organism>
<feature type="chain" id="PRO_1000204079" description="Polyamine aminopropyltransferase">
    <location>
        <begin position="1"/>
        <end position="301"/>
    </location>
</feature>
<feature type="domain" description="PABS" evidence="1">
    <location>
        <begin position="4"/>
        <end position="240"/>
    </location>
</feature>
<feature type="active site" description="Proton acceptor" evidence="1">
    <location>
        <position position="159"/>
    </location>
</feature>
<feature type="binding site" evidence="1">
    <location>
        <position position="33"/>
    </location>
    <ligand>
        <name>S-methyl-5'-thioadenosine</name>
        <dbReference type="ChEBI" id="CHEBI:17509"/>
    </ligand>
</feature>
<feature type="binding site" evidence="1">
    <location>
        <position position="64"/>
    </location>
    <ligand>
        <name>spermidine</name>
        <dbReference type="ChEBI" id="CHEBI:57834"/>
    </ligand>
</feature>
<feature type="binding site" evidence="1">
    <location>
        <position position="89"/>
    </location>
    <ligand>
        <name>spermidine</name>
        <dbReference type="ChEBI" id="CHEBI:57834"/>
    </ligand>
</feature>
<feature type="binding site" evidence="1">
    <location>
        <position position="109"/>
    </location>
    <ligand>
        <name>S-methyl-5'-thioadenosine</name>
        <dbReference type="ChEBI" id="CHEBI:17509"/>
    </ligand>
</feature>
<feature type="binding site" evidence="1">
    <location>
        <begin position="141"/>
        <end position="142"/>
    </location>
    <ligand>
        <name>S-methyl-5'-thioadenosine</name>
        <dbReference type="ChEBI" id="CHEBI:17509"/>
    </ligand>
</feature>
<proteinExistence type="inferred from homology"/>
<gene>
    <name evidence="1" type="primary">speE</name>
    <name type="ordered locus">LS215_1482</name>
</gene>
<evidence type="ECO:0000255" key="1">
    <source>
        <dbReference type="HAMAP-Rule" id="MF_00198"/>
    </source>
</evidence>